<reference key="1">
    <citation type="journal article" date="2014" name="PLoS Genet.">
        <title>Analysis of the genome and transcriptome of Cryptococcus neoformans var. grubii reveals complex RNA expression and microevolution leading to virulence attenuation.</title>
        <authorList>
            <person name="Janbon G."/>
            <person name="Ormerod K.L."/>
            <person name="Paulet D."/>
            <person name="Byrnes E.J. III"/>
            <person name="Yadav V."/>
            <person name="Chatterjee G."/>
            <person name="Mullapudi N."/>
            <person name="Hon C.-C."/>
            <person name="Billmyre R.B."/>
            <person name="Brunel F."/>
            <person name="Bahn Y.-S."/>
            <person name="Chen W."/>
            <person name="Chen Y."/>
            <person name="Chow E.W.L."/>
            <person name="Coppee J.-Y."/>
            <person name="Floyd-Averette A."/>
            <person name="Gaillardin C."/>
            <person name="Gerik K.J."/>
            <person name="Goldberg J."/>
            <person name="Gonzalez-Hilarion S."/>
            <person name="Gujja S."/>
            <person name="Hamlin J.L."/>
            <person name="Hsueh Y.-P."/>
            <person name="Ianiri G."/>
            <person name="Jones S."/>
            <person name="Kodira C.D."/>
            <person name="Kozubowski L."/>
            <person name="Lam W."/>
            <person name="Marra M."/>
            <person name="Mesner L.D."/>
            <person name="Mieczkowski P.A."/>
            <person name="Moyrand F."/>
            <person name="Nielsen K."/>
            <person name="Proux C."/>
            <person name="Rossignol T."/>
            <person name="Schein J.E."/>
            <person name="Sun S."/>
            <person name="Wollschlaeger C."/>
            <person name="Wood I.A."/>
            <person name="Zeng Q."/>
            <person name="Neuveglise C."/>
            <person name="Newlon C.S."/>
            <person name="Perfect J.R."/>
            <person name="Lodge J.K."/>
            <person name="Idnurm A."/>
            <person name="Stajich J.E."/>
            <person name="Kronstad J.W."/>
            <person name="Sanyal K."/>
            <person name="Heitman J."/>
            <person name="Fraser J.A."/>
            <person name="Cuomo C.A."/>
            <person name="Dietrich F.S."/>
        </authorList>
    </citation>
    <scope>NUCLEOTIDE SEQUENCE [LARGE SCALE GENOMIC DNA]</scope>
    <source>
        <strain>H99 / ATCC 208821 / CBS 10515 / FGSC 9487</strain>
    </source>
</reference>
<reference key="2">
    <citation type="journal article" date="2021" name="Front. Microbiol.">
        <title>Dnj1 promotes virulence in Cryptococcus neoformans by maintaining robust endoplasmic reticulum homeostasis under temperature stress.</title>
        <authorList>
            <person name="Horianopoulos L.C."/>
            <person name="Lee C.W.J."/>
            <person name="Hu G."/>
            <person name="Caza M."/>
            <person name="Kronstad J.W."/>
        </authorList>
    </citation>
    <scope>FUNCTION</scope>
    <scope>DISRUPTION PHENOTYPE</scope>
    <scope>SUBCELLULAR LOCATION</scope>
    <scope>INDUCTION</scope>
</reference>
<keyword id="KW-0143">Chaperone</keyword>
<keyword id="KW-0256">Endoplasmic reticulum</keyword>
<keyword id="KW-0677">Repeat</keyword>
<keyword id="KW-0732">Signal</keyword>
<keyword id="KW-0802">TPR repeat</keyword>
<keyword id="KW-0843">Virulence</keyword>
<accession>J9VKM5</accession>
<feature type="signal peptide" evidence="2">
    <location>
        <begin position="1"/>
        <end position="22"/>
    </location>
</feature>
<feature type="chain" id="PRO_5003827926" description="Tetratricopeptide repeat and J domain-containing co-chaperone DNJ1">
    <location>
        <begin position="23"/>
        <end position="522"/>
    </location>
</feature>
<feature type="repeat" description="TPR 1" evidence="2 4">
    <location>
        <begin position="29"/>
        <end position="62"/>
    </location>
</feature>
<feature type="repeat" description="TPR 2" evidence="2 4">
    <location>
        <begin position="63"/>
        <end position="96"/>
    </location>
</feature>
<feature type="repeat" description="TPR 3" evidence="4">
    <location>
        <begin position="97"/>
        <end position="130"/>
    </location>
</feature>
<feature type="repeat" description="TPR 4" evidence="2">
    <location>
        <begin position="142"/>
        <end position="175"/>
    </location>
</feature>
<feature type="repeat" description="TPR 5" evidence="2">
    <location>
        <begin position="210"/>
        <end position="243"/>
    </location>
</feature>
<feature type="repeat" description="TPR 6" evidence="2">
    <location>
        <begin position="256"/>
        <end position="289"/>
    </location>
</feature>
<feature type="repeat" description="TPR 7" evidence="2 4">
    <location>
        <begin position="356"/>
        <end position="389"/>
    </location>
</feature>
<feature type="domain" description="J" evidence="3">
    <location>
        <begin position="410"/>
        <end position="471"/>
    </location>
</feature>
<feature type="region of interest" description="Disordered" evidence="5">
    <location>
        <begin position="465"/>
        <end position="494"/>
    </location>
</feature>
<name>DNJ1_CRYNH</name>
<sequence length="522" mass="58281">MKGFLLVALPVLFLSLSTQVFGEPSIPSAAQIVQNANRLLAEGSYSAAARAYGEAIELDPTGYANYYKRATAYLSMGRHNAALDDFEQILRINPGFVQAHYQRAKILAKEGDFAKAQYELKAYVRTKSDSEAEELSHLLTVGEAAEKSALQAFEKGKWQVCVEHSTKALEVGPNSEKLRRLRVNCATELGDINMVYGDLSRLASLDPSTTYLPLQLSNIAYFIRASSQAAAHIKQCLHFDPDSKPCKAVHKTIRSLEKDAARVRNFIESGTYRQAIKILDGDDGLLVRFEKALDDATKPKDGLPPYLAPQFHPKKNSQMRLDLYALACKASVMANDFGEKGAHWCEETMSMNEENVDSWISRGERLLRVEKWEEAMRAVEKAFELSGRSQDILPRVQKAQRLLKQSKQKDYYKVLGVPRDADERAIKKAFRKAAKLAHPDVGGSEEKMAALNEAYEVLSNTELRQRYDNGDDPNDPTGGQQHNPFAHHGGGMPFQFFQQGGGFQGFHQGFPGGGQKMHFQWN</sequence>
<dbReference type="EMBL" id="CP003824">
    <property type="protein sequence ID" value="AFR94798.1"/>
    <property type="molecule type" value="Genomic_DNA"/>
</dbReference>
<dbReference type="RefSeq" id="XP_012049486.1">
    <property type="nucleotide sequence ID" value="XM_012194096.1"/>
</dbReference>
<dbReference type="SMR" id="J9VKM5"/>
<dbReference type="GeneID" id="23885071"/>
<dbReference type="KEGG" id="cng:CNAG_01347"/>
<dbReference type="VEuPathDB" id="FungiDB:CNAG_01347"/>
<dbReference type="HOGENOM" id="CLU_015935_0_1_1"/>
<dbReference type="OrthoDB" id="5522at5206"/>
<dbReference type="PHI-base" id="PHI:11768"/>
<dbReference type="Proteomes" id="UP000010091">
    <property type="component" value="Chromosome 5"/>
</dbReference>
<dbReference type="GO" id="GO:0005788">
    <property type="term" value="C:endoplasmic reticulum lumen"/>
    <property type="evidence" value="ECO:0007669"/>
    <property type="project" value="UniProtKB-SubCell"/>
</dbReference>
<dbReference type="GO" id="GO:0051787">
    <property type="term" value="F:misfolded protein binding"/>
    <property type="evidence" value="ECO:0007669"/>
    <property type="project" value="TreeGrafter"/>
</dbReference>
<dbReference type="GO" id="GO:0051087">
    <property type="term" value="F:protein-folding chaperone binding"/>
    <property type="evidence" value="ECO:0007669"/>
    <property type="project" value="TreeGrafter"/>
</dbReference>
<dbReference type="GO" id="GO:0034975">
    <property type="term" value="P:protein folding in endoplasmic reticulum"/>
    <property type="evidence" value="ECO:0007669"/>
    <property type="project" value="TreeGrafter"/>
</dbReference>
<dbReference type="CDD" id="cd06257">
    <property type="entry name" value="DnaJ"/>
    <property type="match status" value="1"/>
</dbReference>
<dbReference type="FunFam" id="1.25.40.10:FF:000224">
    <property type="entry name" value="DnaJ and TPR domain protein"/>
    <property type="match status" value="1"/>
</dbReference>
<dbReference type="FunFam" id="1.10.287.110:FF:000089">
    <property type="entry name" value="Related to DnaJ homolog subfamily C member 3"/>
    <property type="match status" value="1"/>
</dbReference>
<dbReference type="Gene3D" id="1.10.287.110">
    <property type="entry name" value="DnaJ domain"/>
    <property type="match status" value="1"/>
</dbReference>
<dbReference type="Gene3D" id="1.25.40.10">
    <property type="entry name" value="Tetratricopeptide repeat domain"/>
    <property type="match status" value="1"/>
</dbReference>
<dbReference type="InterPro" id="IPR051727">
    <property type="entry name" value="DnaJ_C3_Co-chaperones"/>
</dbReference>
<dbReference type="InterPro" id="IPR001623">
    <property type="entry name" value="DnaJ_domain"/>
</dbReference>
<dbReference type="InterPro" id="IPR036869">
    <property type="entry name" value="J_dom_sf"/>
</dbReference>
<dbReference type="InterPro" id="IPR011990">
    <property type="entry name" value="TPR-like_helical_dom_sf"/>
</dbReference>
<dbReference type="InterPro" id="IPR019734">
    <property type="entry name" value="TPR_rpt"/>
</dbReference>
<dbReference type="PANTHER" id="PTHR44140">
    <property type="entry name" value="LD25575P"/>
    <property type="match status" value="1"/>
</dbReference>
<dbReference type="PANTHER" id="PTHR44140:SF2">
    <property type="entry name" value="LD25575P"/>
    <property type="match status" value="1"/>
</dbReference>
<dbReference type="Pfam" id="PF00226">
    <property type="entry name" value="DnaJ"/>
    <property type="match status" value="1"/>
</dbReference>
<dbReference type="Pfam" id="PF00515">
    <property type="entry name" value="TPR_1"/>
    <property type="match status" value="1"/>
</dbReference>
<dbReference type="PRINTS" id="PR00625">
    <property type="entry name" value="JDOMAIN"/>
</dbReference>
<dbReference type="SMART" id="SM00271">
    <property type="entry name" value="DnaJ"/>
    <property type="match status" value="1"/>
</dbReference>
<dbReference type="SMART" id="SM00028">
    <property type="entry name" value="TPR"/>
    <property type="match status" value="4"/>
</dbReference>
<dbReference type="SUPFAM" id="SSF46565">
    <property type="entry name" value="Chaperone J-domain"/>
    <property type="match status" value="1"/>
</dbReference>
<dbReference type="SUPFAM" id="SSF48452">
    <property type="entry name" value="TPR-like"/>
    <property type="match status" value="1"/>
</dbReference>
<dbReference type="PROSITE" id="PS50076">
    <property type="entry name" value="DNAJ_2"/>
    <property type="match status" value="1"/>
</dbReference>
<dbReference type="PROSITE" id="PS50005">
    <property type="entry name" value="TPR"/>
    <property type="match status" value="4"/>
</dbReference>
<dbReference type="PROSITE" id="PS50293">
    <property type="entry name" value="TPR_REGION"/>
    <property type="match status" value="2"/>
</dbReference>
<gene>
    <name evidence="7" type="primary">DNJ1</name>
    <name type="ORF">CNAG_01347</name>
</gene>
<proteinExistence type="evidence at transcript level"/>
<protein>
    <recommendedName>
        <fullName evidence="7">Tetratricopeptide repeat and J domain-containing co-chaperone DNJ1</fullName>
    </recommendedName>
</protein>
<evidence type="ECO:0000250" key="1">
    <source>
        <dbReference type="UniProtKB" id="A0A0D1E2P6"/>
    </source>
</evidence>
<evidence type="ECO:0000255" key="2"/>
<evidence type="ECO:0000255" key="3">
    <source>
        <dbReference type="PROSITE-ProRule" id="PRU00286"/>
    </source>
</evidence>
<evidence type="ECO:0000255" key="4">
    <source>
        <dbReference type="PROSITE-ProRule" id="PRU00339"/>
    </source>
</evidence>
<evidence type="ECO:0000256" key="5">
    <source>
        <dbReference type="SAM" id="MobiDB-lite"/>
    </source>
</evidence>
<evidence type="ECO:0000269" key="6">
    <source>
    </source>
</evidence>
<evidence type="ECO:0000303" key="7">
    <source>
    </source>
</evidence>
<comment type="function">
    <text evidence="6">Endoplasmic reticulum co-chaperone crucial for survival and virulence factor production at elevated temperatures representative of febrile patients during infection (PubMed:34566931). Contributes to virulence in a mouse model of cryptococcosis (PubMed:34566931). With chaperone CNE1, coordinately maintains ER homeostasis and contributes to maintenance of cell wall architecture (PubMed:34566931).</text>
</comment>
<comment type="subcellular location">
    <subcellularLocation>
        <location evidence="6">Endoplasmic reticulum lumen</location>
    </subcellularLocation>
</comment>
<comment type="induction">
    <text evidence="6">Protein amounts are increased by ER stress elicited by tunicamycin.</text>
</comment>
<comment type="domain">
    <text evidence="1">The TPR repeats mediate interaction with unfolded polypeptides and the J-domain is essential to stimulate the ATPase activity of the chaperone and to increase its substrate affinity during the folding cycle.</text>
</comment>
<comment type="disruption phenotype">
    <text evidence="6">Leads to hypersensitivity to endoplasmic reticulum (ER) stress caused by the N-glycosylation inhibitor tunicamycin (PubMed:34566931). Markedly impairs the elaboration of virulence factors such as the polysaccharide capsule and extracellular urease activity, when induced at 37 degrees Celsius corresponsing to the human body temperature (PubMed:34566931). Also impairs induction of the cytokines IL-6, IL-10, and MCP-1 in the lungs of mice and attenuates virulence in an intranasal murine model of cryptococcosis (PubMed:34566931). Leads to abnormal cell morphology of enlarged cells with collapsed cell walls and increased chitin within the cell walls, as well as strong growth defects at both 30 and 37 degrees Celsius when both DNJ1 and CNE1 are deleted (PubMed:34566931).</text>
</comment>
<organism>
    <name type="scientific">Cryptococcus neoformans var. grubii serotype A (strain H99 / ATCC 208821 / CBS 10515 / FGSC 9487)</name>
    <name type="common">Filobasidiella neoformans var. grubii</name>
    <dbReference type="NCBI Taxonomy" id="235443"/>
    <lineage>
        <taxon>Eukaryota</taxon>
        <taxon>Fungi</taxon>
        <taxon>Dikarya</taxon>
        <taxon>Basidiomycota</taxon>
        <taxon>Agaricomycotina</taxon>
        <taxon>Tremellomycetes</taxon>
        <taxon>Tremellales</taxon>
        <taxon>Cryptococcaceae</taxon>
        <taxon>Cryptococcus</taxon>
        <taxon>Cryptococcus neoformans species complex</taxon>
    </lineage>
</organism>